<comment type="function">
    <text evidence="1">Catalyzes the formation of S-adenosylmethionine (AdoMet) from methionine and ATP. The overall synthetic reaction is composed of two sequential steps, AdoMet formation and the subsequent tripolyphosphate hydrolysis which occurs prior to release of AdoMet from the enzyme.</text>
</comment>
<comment type="catalytic activity">
    <reaction evidence="1">
        <text>L-methionine + ATP + H2O = S-adenosyl-L-methionine + phosphate + diphosphate</text>
        <dbReference type="Rhea" id="RHEA:21080"/>
        <dbReference type="ChEBI" id="CHEBI:15377"/>
        <dbReference type="ChEBI" id="CHEBI:30616"/>
        <dbReference type="ChEBI" id="CHEBI:33019"/>
        <dbReference type="ChEBI" id="CHEBI:43474"/>
        <dbReference type="ChEBI" id="CHEBI:57844"/>
        <dbReference type="ChEBI" id="CHEBI:59789"/>
        <dbReference type="EC" id="2.5.1.6"/>
    </reaction>
</comment>
<comment type="cofactor">
    <cofactor evidence="1">
        <name>Mg(2+)</name>
        <dbReference type="ChEBI" id="CHEBI:18420"/>
    </cofactor>
    <text evidence="1">Binds 2 divalent ions per subunit.</text>
</comment>
<comment type="cofactor">
    <cofactor evidence="1">
        <name>K(+)</name>
        <dbReference type="ChEBI" id="CHEBI:29103"/>
    </cofactor>
    <text evidence="1">Binds 1 potassium ion per subunit.</text>
</comment>
<comment type="pathway">
    <text evidence="1">Amino-acid biosynthesis; S-adenosyl-L-methionine biosynthesis; S-adenosyl-L-methionine from L-methionine: step 1/1.</text>
</comment>
<comment type="subunit">
    <text evidence="1">Homotetramer; dimer of dimers.</text>
</comment>
<comment type="subcellular location">
    <subcellularLocation>
        <location evidence="1">Cytoplasm</location>
    </subcellularLocation>
</comment>
<comment type="similarity">
    <text evidence="1">Belongs to the AdoMet synthase family.</text>
</comment>
<proteinExistence type="inferred from homology"/>
<organism>
    <name type="scientific">Nostoc punctiforme (strain ATCC 29133 / PCC 73102)</name>
    <dbReference type="NCBI Taxonomy" id="63737"/>
    <lineage>
        <taxon>Bacteria</taxon>
        <taxon>Bacillati</taxon>
        <taxon>Cyanobacteriota</taxon>
        <taxon>Cyanophyceae</taxon>
        <taxon>Nostocales</taxon>
        <taxon>Nostocaceae</taxon>
        <taxon>Nostoc</taxon>
    </lineage>
</organism>
<feature type="chain" id="PRO_1000093067" description="S-adenosylmethionine synthase">
    <location>
        <begin position="1"/>
        <end position="424"/>
    </location>
</feature>
<feature type="region of interest" description="Flexible loop" evidence="1">
    <location>
        <begin position="100"/>
        <end position="110"/>
    </location>
</feature>
<feature type="binding site" description="in other chain" evidence="1">
    <location>
        <position position="16"/>
    </location>
    <ligand>
        <name>ATP</name>
        <dbReference type="ChEBI" id="CHEBI:30616"/>
        <note>ligand shared between two neighboring subunits</note>
    </ligand>
</feature>
<feature type="binding site" evidence="1">
    <location>
        <position position="18"/>
    </location>
    <ligand>
        <name>Mg(2+)</name>
        <dbReference type="ChEBI" id="CHEBI:18420"/>
    </ligand>
</feature>
<feature type="binding site" evidence="1">
    <location>
        <position position="44"/>
    </location>
    <ligand>
        <name>K(+)</name>
        <dbReference type="ChEBI" id="CHEBI:29103"/>
    </ligand>
</feature>
<feature type="binding site" description="in other chain" evidence="1">
    <location>
        <position position="57"/>
    </location>
    <ligand>
        <name>L-methionine</name>
        <dbReference type="ChEBI" id="CHEBI:57844"/>
        <note>ligand shared between two neighboring subunits</note>
    </ligand>
</feature>
<feature type="binding site" description="in other chain" evidence="1">
    <location>
        <position position="100"/>
    </location>
    <ligand>
        <name>L-methionine</name>
        <dbReference type="ChEBI" id="CHEBI:57844"/>
        <note>ligand shared between two neighboring subunits</note>
    </ligand>
</feature>
<feature type="binding site" description="in other chain" evidence="1">
    <location>
        <begin position="175"/>
        <end position="177"/>
    </location>
    <ligand>
        <name>ATP</name>
        <dbReference type="ChEBI" id="CHEBI:30616"/>
        <note>ligand shared between two neighboring subunits</note>
    </ligand>
</feature>
<feature type="binding site" description="in other chain" evidence="1">
    <location>
        <begin position="251"/>
        <end position="252"/>
    </location>
    <ligand>
        <name>ATP</name>
        <dbReference type="ChEBI" id="CHEBI:30616"/>
        <note>ligand shared between two neighboring subunits</note>
    </ligand>
</feature>
<feature type="binding site" evidence="1">
    <location>
        <position position="260"/>
    </location>
    <ligand>
        <name>ATP</name>
        <dbReference type="ChEBI" id="CHEBI:30616"/>
        <note>ligand shared between two neighboring subunits</note>
    </ligand>
</feature>
<feature type="binding site" evidence="1">
    <location>
        <position position="260"/>
    </location>
    <ligand>
        <name>L-methionine</name>
        <dbReference type="ChEBI" id="CHEBI:57844"/>
        <note>ligand shared between two neighboring subunits</note>
    </ligand>
</feature>
<feature type="binding site" description="in other chain" evidence="1">
    <location>
        <begin position="266"/>
        <end position="267"/>
    </location>
    <ligand>
        <name>ATP</name>
        <dbReference type="ChEBI" id="CHEBI:30616"/>
        <note>ligand shared between two neighboring subunits</note>
    </ligand>
</feature>
<feature type="binding site" evidence="1">
    <location>
        <position position="283"/>
    </location>
    <ligand>
        <name>ATP</name>
        <dbReference type="ChEBI" id="CHEBI:30616"/>
        <note>ligand shared between two neighboring subunits</note>
    </ligand>
</feature>
<feature type="binding site" evidence="1">
    <location>
        <position position="287"/>
    </location>
    <ligand>
        <name>ATP</name>
        <dbReference type="ChEBI" id="CHEBI:30616"/>
        <note>ligand shared between two neighboring subunits</note>
    </ligand>
</feature>
<feature type="binding site" description="in other chain" evidence="1">
    <location>
        <position position="291"/>
    </location>
    <ligand>
        <name>L-methionine</name>
        <dbReference type="ChEBI" id="CHEBI:57844"/>
        <note>ligand shared between two neighboring subunits</note>
    </ligand>
</feature>
<protein>
    <recommendedName>
        <fullName evidence="1">S-adenosylmethionine synthase</fullName>
        <shortName evidence="1">AdoMet synthase</shortName>
        <ecNumber evidence="1">2.5.1.6</ecNumber>
    </recommendedName>
    <alternativeName>
        <fullName evidence="1">MAT</fullName>
    </alternativeName>
    <alternativeName>
        <fullName evidence="1">Methionine adenosyltransferase</fullName>
    </alternativeName>
</protein>
<gene>
    <name evidence="1" type="primary">metK</name>
    <name type="ordered locus">Npun_F2753</name>
</gene>
<accession>B2IUI4</accession>
<sequence length="424" mass="45720">MSRRYLFTSESVTEGHPDKICDQISDTILDALLTQDPSSRVAAEVVVNTGLVLITGEITTKANVNFVNLARKKIAEIGYTNADNGFSANSTSVLLALDEQSPDIAQGVNTAQETRQQDSDELFDKIGAGDQGIMFGFASNETPELMPLPISLAHRIARRLAAVRKTGELSYLRPDGKTQVTVVYEDGRPVGIDTILISTQHTATIGEITDEAAVQAKIKQDLWSAVVEPVFGDIDVKPNDQTRFLVNPTGKFVVGGPQGDSGLTGRKIIVDTYGGYSRHGGGAFSGKDPTKVDRSAAYAARYVAKNIVAAGLAEKVEIQLSYAIGVARPTSILVDTFGTGKVDEETLLELINQHFELRPAGIIHTFNLRNLPSERGGRFYQDVAAYGHFGRADLDLPWEQTDKAELLKQAANESLSAAIAQALT</sequence>
<evidence type="ECO:0000255" key="1">
    <source>
        <dbReference type="HAMAP-Rule" id="MF_00086"/>
    </source>
</evidence>
<reference key="1">
    <citation type="journal article" date="2013" name="Plant Physiol.">
        <title>A Nostoc punctiforme Sugar Transporter Necessary to Establish a Cyanobacterium-Plant Symbiosis.</title>
        <authorList>
            <person name="Ekman M."/>
            <person name="Picossi S."/>
            <person name="Campbell E.L."/>
            <person name="Meeks J.C."/>
            <person name="Flores E."/>
        </authorList>
    </citation>
    <scope>NUCLEOTIDE SEQUENCE [LARGE SCALE GENOMIC DNA]</scope>
    <source>
        <strain>ATCC 29133 / PCC 73102</strain>
    </source>
</reference>
<keyword id="KW-0067">ATP-binding</keyword>
<keyword id="KW-0963">Cytoplasm</keyword>
<keyword id="KW-0460">Magnesium</keyword>
<keyword id="KW-0479">Metal-binding</keyword>
<keyword id="KW-0547">Nucleotide-binding</keyword>
<keyword id="KW-0554">One-carbon metabolism</keyword>
<keyword id="KW-0630">Potassium</keyword>
<keyword id="KW-1185">Reference proteome</keyword>
<keyword id="KW-0808">Transferase</keyword>
<name>METK_NOSP7</name>
<dbReference type="EC" id="2.5.1.6" evidence="1"/>
<dbReference type="EMBL" id="CP001037">
    <property type="protein sequence ID" value="ACC81290.1"/>
    <property type="molecule type" value="Genomic_DNA"/>
</dbReference>
<dbReference type="RefSeq" id="WP_012409284.1">
    <property type="nucleotide sequence ID" value="NC_010628.1"/>
</dbReference>
<dbReference type="SMR" id="B2IUI4"/>
<dbReference type="STRING" id="63737.Npun_F2753"/>
<dbReference type="EnsemblBacteria" id="ACC81290">
    <property type="protein sequence ID" value="ACC81290"/>
    <property type="gene ID" value="Npun_F2753"/>
</dbReference>
<dbReference type="KEGG" id="npu:Npun_F2753"/>
<dbReference type="eggNOG" id="COG0192">
    <property type="taxonomic scope" value="Bacteria"/>
</dbReference>
<dbReference type="HOGENOM" id="CLU_041802_1_1_3"/>
<dbReference type="OrthoDB" id="9801686at2"/>
<dbReference type="PhylomeDB" id="B2IUI4"/>
<dbReference type="UniPathway" id="UPA00315">
    <property type="reaction ID" value="UER00080"/>
</dbReference>
<dbReference type="Proteomes" id="UP000001191">
    <property type="component" value="Chromosome"/>
</dbReference>
<dbReference type="GO" id="GO:0005737">
    <property type="term" value="C:cytoplasm"/>
    <property type="evidence" value="ECO:0007669"/>
    <property type="project" value="UniProtKB-SubCell"/>
</dbReference>
<dbReference type="GO" id="GO:0005524">
    <property type="term" value="F:ATP binding"/>
    <property type="evidence" value="ECO:0007669"/>
    <property type="project" value="UniProtKB-UniRule"/>
</dbReference>
<dbReference type="GO" id="GO:0000287">
    <property type="term" value="F:magnesium ion binding"/>
    <property type="evidence" value="ECO:0007669"/>
    <property type="project" value="UniProtKB-UniRule"/>
</dbReference>
<dbReference type="GO" id="GO:0004478">
    <property type="term" value="F:methionine adenosyltransferase activity"/>
    <property type="evidence" value="ECO:0007669"/>
    <property type="project" value="UniProtKB-UniRule"/>
</dbReference>
<dbReference type="GO" id="GO:0006730">
    <property type="term" value="P:one-carbon metabolic process"/>
    <property type="evidence" value="ECO:0007669"/>
    <property type="project" value="UniProtKB-KW"/>
</dbReference>
<dbReference type="GO" id="GO:0006556">
    <property type="term" value="P:S-adenosylmethionine biosynthetic process"/>
    <property type="evidence" value="ECO:0007669"/>
    <property type="project" value="UniProtKB-UniRule"/>
</dbReference>
<dbReference type="CDD" id="cd18079">
    <property type="entry name" value="S-AdoMet_synt"/>
    <property type="match status" value="1"/>
</dbReference>
<dbReference type="FunFam" id="3.30.300.10:FF:000003">
    <property type="entry name" value="S-adenosylmethionine synthase"/>
    <property type="match status" value="1"/>
</dbReference>
<dbReference type="Gene3D" id="3.30.300.10">
    <property type="match status" value="3"/>
</dbReference>
<dbReference type="HAMAP" id="MF_00086">
    <property type="entry name" value="S_AdoMet_synth1"/>
    <property type="match status" value="1"/>
</dbReference>
<dbReference type="InterPro" id="IPR022631">
    <property type="entry name" value="ADOMET_SYNTHASE_CS"/>
</dbReference>
<dbReference type="InterPro" id="IPR022630">
    <property type="entry name" value="S-AdoMet_synt_C"/>
</dbReference>
<dbReference type="InterPro" id="IPR022629">
    <property type="entry name" value="S-AdoMet_synt_central"/>
</dbReference>
<dbReference type="InterPro" id="IPR022628">
    <property type="entry name" value="S-AdoMet_synt_N"/>
</dbReference>
<dbReference type="InterPro" id="IPR002133">
    <property type="entry name" value="S-AdoMet_synthetase"/>
</dbReference>
<dbReference type="InterPro" id="IPR022636">
    <property type="entry name" value="S-AdoMet_synthetase_sfam"/>
</dbReference>
<dbReference type="NCBIfam" id="TIGR01034">
    <property type="entry name" value="metK"/>
    <property type="match status" value="1"/>
</dbReference>
<dbReference type="PANTHER" id="PTHR11964">
    <property type="entry name" value="S-ADENOSYLMETHIONINE SYNTHETASE"/>
    <property type="match status" value="1"/>
</dbReference>
<dbReference type="Pfam" id="PF02773">
    <property type="entry name" value="S-AdoMet_synt_C"/>
    <property type="match status" value="1"/>
</dbReference>
<dbReference type="Pfam" id="PF02772">
    <property type="entry name" value="S-AdoMet_synt_M"/>
    <property type="match status" value="1"/>
</dbReference>
<dbReference type="Pfam" id="PF00438">
    <property type="entry name" value="S-AdoMet_synt_N"/>
    <property type="match status" value="1"/>
</dbReference>
<dbReference type="PIRSF" id="PIRSF000497">
    <property type="entry name" value="MAT"/>
    <property type="match status" value="1"/>
</dbReference>
<dbReference type="SUPFAM" id="SSF55973">
    <property type="entry name" value="S-adenosylmethionine synthetase"/>
    <property type="match status" value="3"/>
</dbReference>
<dbReference type="PROSITE" id="PS00376">
    <property type="entry name" value="ADOMET_SYNTHASE_1"/>
    <property type="match status" value="1"/>
</dbReference>
<dbReference type="PROSITE" id="PS00377">
    <property type="entry name" value="ADOMET_SYNTHASE_2"/>
    <property type="match status" value="1"/>
</dbReference>